<feature type="chain" id="PRO_1000026451" description="Xylose isomerase">
    <location>
        <begin position="1"/>
        <end position="436"/>
    </location>
</feature>
<feature type="active site" evidence="1">
    <location>
        <position position="100"/>
    </location>
</feature>
<feature type="active site" evidence="1">
    <location>
        <position position="103"/>
    </location>
</feature>
<feature type="binding site" evidence="1">
    <location>
        <position position="231"/>
    </location>
    <ligand>
        <name>Mg(2+)</name>
        <dbReference type="ChEBI" id="CHEBI:18420"/>
        <label>1</label>
    </ligand>
</feature>
<feature type="binding site" evidence="1">
    <location>
        <position position="267"/>
    </location>
    <ligand>
        <name>Mg(2+)</name>
        <dbReference type="ChEBI" id="CHEBI:18420"/>
        <label>1</label>
    </ligand>
</feature>
<feature type="binding site" evidence="1">
    <location>
        <position position="267"/>
    </location>
    <ligand>
        <name>Mg(2+)</name>
        <dbReference type="ChEBI" id="CHEBI:18420"/>
        <label>2</label>
    </ligand>
</feature>
<feature type="binding site" evidence="1">
    <location>
        <position position="270"/>
    </location>
    <ligand>
        <name>Mg(2+)</name>
        <dbReference type="ChEBI" id="CHEBI:18420"/>
        <label>2</label>
    </ligand>
</feature>
<feature type="binding site" evidence="1">
    <location>
        <position position="295"/>
    </location>
    <ligand>
        <name>Mg(2+)</name>
        <dbReference type="ChEBI" id="CHEBI:18420"/>
        <label>1</label>
    </ligand>
</feature>
<feature type="binding site" evidence="1">
    <location>
        <position position="306"/>
    </location>
    <ligand>
        <name>Mg(2+)</name>
        <dbReference type="ChEBI" id="CHEBI:18420"/>
        <label>2</label>
    </ligand>
</feature>
<feature type="binding site" evidence="1">
    <location>
        <position position="308"/>
    </location>
    <ligand>
        <name>Mg(2+)</name>
        <dbReference type="ChEBI" id="CHEBI:18420"/>
        <label>2</label>
    </ligand>
</feature>
<feature type="binding site" evidence="1">
    <location>
        <position position="338"/>
    </location>
    <ligand>
        <name>Mg(2+)</name>
        <dbReference type="ChEBI" id="CHEBI:18420"/>
        <label>1</label>
    </ligand>
</feature>
<reference key="1">
    <citation type="journal article" date="2006" name="Genome Biol.">
        <title>The genome of Rhizobium leguminosarum has recognizable core and accessory components.</title>
        <authorList>
            <person name="Young J.P.W."/>
            <person name="Crossman L.C."/>
            <person name="Johnston A.W.B."/>
            <person name="Thomson N.R."/>
            <person name="Ghazoui Z.F."/>
            <person name="Hull K.H."/>
            <person name="Wexler M."/>
            <person name="Curson A.R.J."/>
            <person name="Todd J.D."/>
            <person name="Poole P.S."/>
            <person name="Mauchline T.H."/>
            <person name="East A.K."/>
            <person name="Quail M.A."/>
            <person name="Churcher C."/>
            <person name="Arrowsmith C."/>
            <person name="Cherevach I."/>
            <person name="Chillingworth T."/>
            <person name="Clarke K."/>
            <person name="Cronin A."/>
            <person name="Davis P."/>
            <person name="Fraser A."/>
            <person name="Hance Z."/>
            <person name="Hauser H."/>
            <person name="Jagels K."/>
            <person name="Moule S."/>
            <person name="Mungall K."/>
            <person name="Norbertczak H."/>
            <person name="Rabbinowitsch E."/>
            <person name="Sanders M."/>
            <person name="Simmonds M."/>
            <person name="Whitehead S."/>
            <person name="Parkhill J."/>
        </authorList>
    </citation>
    <scope>NUCLEOTIDE SEQUENCE [LARGE SCALE GENOMIC DNA]</scope>
    <source>
        <strain>DSM 114642 / LMG 32736 / 3841</strain>
    </source>
</reference>
<evidence type="ECO:0000255" key="1">
    <source>
        <dbReference type="HAMAP-Rule" id="MF_00455"/>
    </source>
</evidence>
<organism>
    <name type="scientific">Rhizobium johnstonii (strain DSM 114642 / LMG 32736 / 3841)</name>
    <name type="common">Rhizobium leguminosarum bv. viciae</name>
    <dbReference type="NCBI Taxonomy" id="216596"/>
    <lineage>
        <taxon>Bacteria</taxon>
        <taxon>Pseudomonadati</taxon>
        <taxon>Pseudomonadota</taxon>
        <taxon>Alphaproteobacteria</taxon>
        <taxon>Hyphomicrobiales</taxon>
        <taxon>Rhizobiaceae</taxon>
        <taxon>Rhizobium/Agrobacterium group</taxon>
        <taxon>Rhizobium</taxon>
        <taxon>Rhizobium johnstonii</taxon>
    </lineage>
</organism>
<gene>
    <name evidence="1" type="primary">xylA</name>
    <name type="ordered locus">RL4176</name>
</gene>
<name>XYLA_RHIJ3</name>
<proteinExistence type="inferred from homology"/>
<protein>
    <recommendedName>
        <fullName evidence="1">Xylose isomerase</fullName>
        <ecNumber evidence="1">5.3.1.5</ecNumber>
    </recommendedName>
</protein>
<dbReference type="EC" id="5.3.1.5" evidence="1"/>
<dbReference type="EMBL" id="AM236080">
    <property type="protein sequence ID" value="CAK09665.1"/>
    <property type="molecule type" value="Genomic_DNA"/>
</dbReference>
<dbReference type="RefSeq" id="WP_003552938.1">
    <property type="nucleotide sequence ID" value="NC_008380.1"/>
</dbReference>
<dbReference type="SMR" id="Q1MBL8"/>
<dbReference type="EnsemblBacteria" id="CAK09665">
    <property type="protein sequence ID" value="CAK09665"/>
    <property type="gene ID" value="RL4176"/>
</dbReference>
<dbReference type="KEGG" id="rle:RL4176"/>
<dbReference type="eggNOG" id="COG2115">
    <property type="taxonomic scope" value="Bacteria"/>
</dbReference>
<dbReference type="HOGENOM" id="CLU_037261_1_0_5"/>
<dbReference type="Proteomes" id="UP000006575">
    <property type="component" value="Chromosome"/>
</dbReference>
<dbReference type="GO" id="GO:0005737">
    <property type="term" value="C:cytoplasm"/>
    <property type="evidence" value="ECO:0007669"/>
    <property type="project" value="UniProtKB-SubCell"/>
</dbReference>
<dbReference type="GO" id="GO:0000287">
    <property type="term" value="F:magnesium ion binding"/>
    <property type="evidence" value="ECO:0007669"/>
    <property type="project" value="UniProtKB-UniRule"/>
</dbReference>
<dbReference type="GO" id="GO:0009045">
    <property type="term" value="F:xylose isomerase activity"/>
    <property type="evidence" value="ECO:0007669"/>
    <property type="project" value="UniProtKB-UniRule"/>
</dbReference>
<dbReference type="GO" id="GO:0042732">
    <property type="term" value="P:D-xylose metabolic process"/>
    <property type="evidence" value="ECO:0007669"/>
    <property type="project" value="UniProtKB-UniRule"/>
</dbReference>
<dbReference type="FunFam" id="3.20.20.150:FF:000002">
    <property type="entry name" value="Xylose isomerase"/>
    <property type="match status" value="1"/>
</dbReference>
<dbReference type="Gene3D" id="3.20.20.150">
    <property type="entry name" value="Divalent-metal-dependent TIM barrel enzymes"/>
    <property type="match status" value="1"/>
</dbReference>
<dbReference type="HAMAP" id="MF_00455">
    <property type="entry name" value="Xylose_isom_A"/>
    <property type="match status" value="1"/>
</dbReference>
<dbReference type="InterPro" id="IPR036237">
    <property type="entry name" value="Xyl_isomerase-like_sf"/>
</dbReference>
<dbReference type="InterPro" id="IPR013452">
    <property type="entry name" value="Xylose_isom_bac"/>
</dbReference>
<dbReference type="InterPro" id="IPR001998">
    <property type="entry name" value="Xylose_isomerase"/>
</dbReference>
<dbReference type="NCBIfam" id="NF003998">
    <property type="entry name" value="PRK05474.1"/>
    <property type="match status" value="1"/>
</dbReference>
<dbReference type="NCBIfam" id="TIGR02630">
    <property type="entry name" value="xylose_isom_A"/>
    <property type="match status" value="1"/>
</dbReference>
<dbReference type="PANTHER" id="PTHR48408">
    <property type="match status" value="1"/>
</dbReference>
<dbReference type="PANTHER" id="PTHR48408:SF1">
    <property type="entry name" value="XYLOSE ISOMERASE"/>
    <property type="match status" value="1"/>
</dbReference>
<dbReference type="PRINTS" id="PR00688">
    <property type="entry name" value="XYLOSISMRASE"/>
</dbReference>
<dbReference type="SUPFAM" id="SSF51658">
    <property type="entry name" value="Xylose isomerase-like"/>
    <property type="match status" value="1"/>
</dbReference>
<dbReference type="PROSITE" id="PS51415">
    <property type="entry name" value="XYLOSE_ISOMERASE"/>
    <property type="match status" value="1"/>
</dbReference>
<keyword id="KW-0119">Carbohydrate metabolism</keyword>
<keyword id="KW-0963">Cytoplasm</keyword>
<keyword id="KW-0413">Isomerase</keyword>
<keyword id="KW-0460">Magnesium</keyword>
<keyword id="KW-0479">Metal-binding</keyword>
<keyword id="KW-0859">Xylose metabolism</keyword>
<accession>Q1MBL8</accession>
<comment type="catalytic activity">
    <reaction evidence="1">
        <text>alpha-D-xylose = alpha-D-xylulofuranose</text>
        <dbReference type="Rhea" id="RHEA:22816"/>
        <dbReference type="ChEBI" id="CHEBI:28518"/>
        <dbReference type="ChEBI" id="CHEBI:188998"/>
        <dbReference type="EC" id="5.3.1.5"/>
    </reaction>
</comment>
<comment type="cofactor">
    <cofactor evidence="1">
        <name>Mg(2+)</name>
        <dbReference type="ChEBI" id="CHEBI:18420"/>
    </cofactor>
    <text evidence="1">Binds 2 magnesium ions per subunit.</text>
</comment>
<comment type="subunit">
    <text evidence="1">Homotetramer.</text>
</comment>
<comment type="subcellular location">
    <subcellularLocation>
        <location evidence="1">Cytoplasm</location>
    </subcellularLocation>
</comment>
<comment type="similarity">
    <text evidence="1">Belongs to the xylose isomerase family.</text>
</comment>
<sequence>MSTGFFGDIQKVKYEGPDSTNPLAFRHYQPDEIVMGKRMEDHLRFAVAYWHTFTWPGGDPFGGQTFLRPWFEDTMKAAKLKADVAFEFFSLLGSPYYCFHDADVRPEGKTFAENTKNLNEIVDYFAEKQAATGTKLLWGTANLFSHRRYMSGAATNPDPDVFAFAAATVKTCIDATQKLGGENYVLWGGREGYETLLNTDIGRELDQLGRFLNLVVEYKHKIGYKGTILIEPKPQEPTKHQYDYDVATVYGFLKKHGLENEVKLNIEQGHAILAGHSFEHELALANALGIFGSIDMNRNDYQSGWDTDQFPNNVPEMALAYYHVLAGGGFKTGGTNFDSKLRRQSLDPADLLIGHIGGMDCCARGLKAAAKMIEDKALSQPLADRYAGWESAEAQKLFRGEYSLDEITHYVESHDVNPQPRSGKQELLENVVNRYV</sequence>